<name>MCBP_MYCBO</name>
<reference key="1">
    <citation type="journal article" date="2003" name="Proc. Natl. Acad. Sci. U.S.A.">
        <title>The complete genome sequence of Mycobacterium bovis.</title>
        <authorList>
            <person name="Garnier T."/>
            <person name="Eiglmeier K."/>
            <person name="Camus J.-C."/>
            <person name="Medina N."/>
            <person name="Mansoor H."/>
            <person name="Pryor M."/>
            <person name="Duthoy S."/>
            <person name="Grondin S."/>
            <person name="Lacroix C."/>
            <person name="Monsempe C."/>
            <person name="Simon S."/>
            <person name="Harris B."/>
            <person name="Atkin R."/>
            <person name="Doggett J."/>
            <person name="Mayes R."/>
            <person name="Keating L."/>
            <person name="Wheeler P.R."/>
            <person name="Parkhill J."/>
            <person name="Barrell B.G."/>
            <person name="Cole S.T."/>
            <person name="Gordon S.V."/>
            <person name="Hewinson R.G."/>
        </authorList>
    </citation>
    <scope>NUCLEOTIDE SEQUENCE [LARGE SCALE GENOMIC DNA]</scope>
    <source>
        <strain>ATCC BAA-935 / AF2122/97</strain>
    </source>
</reference>
<reference key="2">
    <citation type="journal article" date="2017" name="Genome Announc.">
        <title>Updated reference genome sequence and annotation of Mycobacterium bovis AF2122/97.</title>
        <authorList>
            <person name="Malone K.M."/>
            <person name="Farrell D."/>
            <person name="Stuber T.P."/>
            <person name="Schubert O.T."/>
            <person name="Aebersold R."/>
            <person name="Robbe-Austerman S."/>
            <person name="Gordon S.V."/>
        </authorList>
    </citation>
    <scope>NUCLEOTIDE SEQUENCE [LARGE SCALE GENOMIC DNA]</scope>
    <scope>GENOME REANNOTATION</scope>
    <source>
        <strain>ATCC BAA-935 / AF2122/97</strain>
    </source>
</reference>
<dbReference type="EMBL" id="LT708304">
    <property type="protein sequence ID" value="SIU00615.1"/>
    <property type="molecule type" value="Genomic_DNA"/>
</dbReference>
<dbReference type="RefSeq" id="NP_855659.1">
    <property type="nucleotide sequence ID" value="NC_002945.3"/>
</dbReference>
<dbReference type="RefSeq" id="WP_003409992.1">
    <property type="nucleotide sequence ID" value="NC_002945.4"/>
</dbReference>
<dbReference type="SMR" id="P64906"/>
<dbReference type="KEGG" id="mbo:BQ2027_MB2009"/>
<dbReference type="Proteomes" id="UP000001419">
    <property type="component" value="Chromosome"/>
</dbReference>
<dbReference type="GO" id="GO:0005576">
    <property type="term" value="C:extracellular region"/>
    <property type="evidence" value="ECO:0007669"/>
    <property type="project" value="UniProtKB-SubCell"/>
</dbReference>
<dbReference type="GO" id="GO:0005886">
    <property type="term" value="C:plasma membrane"/>
    <property type="evidence" value="ECO:0007669"/>
    <property type="project" value="UniProtKB-SubCell"/>
</dbReference>
<dbReference type="GO" id="GO:0004553">
    <property type="term" value="F:hydrolase activity, hydrolyzing O-glycosyl compounds"/>
    <property type="evidence" value="ECO:0007669"/>
    <property type="project" value="InterPro"/>
</dbReference>
<dbReference type="GO" id="GO:0030247">
    <property type="term" value="F:polysaccharide binding"/>
    <property type="evidence" value="ECO:0007669"/>
    <property type="project" value="InterPro"/>
</dbReference>
<dbReference type="GO" id="GO:0005975">
    <property type="term" value="P:carbohydrate metabolic process"/>
    <property type="evidence" value="ECO:0007669"/>
    <property type="project" value="InterPro"/>
</dbReference>
<dbReference type="Gene3D" id="2.60.40.290">
    <property type="match status" value="1"/>
</dbReference>
<dbReference type="InterPro" id="IPR001919">
    <property type="entry name" value="CBD2"/>
</dbReference>
<dbReference type="InterPro" id="IPR008965">
    <property type="entry name" value="CBM2/CBM3_carb-bd_dom_sf"/>
</dbReference>
<dbReference type="InterPro" id="IPR012291">
    <property type="entry name" value="CBM2_carb-bd_dom_sf"/>
</dbReference>
<dbReference type="Pfam" id="PF00553">
    <property type="entry name" value="CBM_2"/>
    <property type="match status" value="1"/>
</dbReference>
<dbReference type="SMART" id="SM00637">
    <property type="entry name" value="CBD_II"/>
    <property type="match status" value="1"/>
</dbReference>
<dbReference type="SUPFAM" id="SSF49384">
    <property type="entry name" value="Carbohydrate-binding domain"/>
    <property type="match status" value="1"/>
</dbReference>
<dbReference type="PROSITE" id="PS51173">
    <property type="entry name" value="CBM2"/>
    <property type="match status" value="1"/>
</dbReference>
<evidence type="ECO:0000250" key="1">
    <source>
        <dbReference type="UniProtKB" id="P9WLQ1"/>
    </source>
</evidence>
<evidence type="ECO:0000255" key="2"/>
<evidence type="ECO:0000255" key="3">
    <source>
        <dbReference type="PROSITE-ProRule" id="PRU01135"/>
    </source>
</evidence>
<accession>P64906</accession>
<accession>A0A1R3Y0N5</accession>
<accession>Q10870</accession>
<accession>X2BJT8</accession>
<gene>
    <name type="ordered locus">BQ2027_MB2009</name>
</gene>
<comment type="function">
    <text evidence="1">Carbohydrate binding protein that binds chitin and cellulose. Lacks enzymatic activity and does not hydrolyze chitin and cellulose. May interact with mycobacterial biofilms, which are rich in cellulose, and play a role in biofilm formation. Could also act as an adhesin, improving the initial attachment to host cells and aiding M.bovis during the initial stages of infection.</text>
</comment>
<comment type="function">
    <text evidence="1">May act as a virulence factor that modulates host immune responses and contributes to host immune evasion.</text>
</comment>
<comment type="subcellular location">
    <subcellularLocation>
        <location evidence="1">Secreted</location>
    </subcellularLocation>
    <subcellularLocation>
        <location evidence="1">Secreted</location>
        <location evidence="1">Cell wall</location>
    </subcellularLocation>
    <subcellularLocation>
        <location evidence="1">Cell membrane</location>
    </subcellularLocation>
</comment>
<keyword id="KW-1003">Cell membrane</keyword>
<keyword id="KW-0134">Cell wall</keyword>
<keyword id="KW-0472">Membrane</keyword>
<keyword id="KW-1185">Reference proteome</keyword>
<keyword id="KW-0964">Secreted</keyword>
<keyword id="KW-0732">Signal</keyword>
<keyword id="KW-0843">Virulence</keyword>
<feature type="signal peptide" evidence="2">
    <location>
        <begin position="1"/>
        <end position="37"/>
    </location>
</feature>
<feature type="chain" id="PRO_0000014115" description="Cellulose/chitin binding protein BQ2027_MB2009">
    <location>
        <begin position="38"/>
        <end position="142"/>
    </location>
</feature>
<feature type="domain" description="CBM2" evidence="3">
    <location>
        <begin position="38"/>
        <end position="142"/>
    </location>
</feature>
<organism>
    <name type="scientific">Mycobacterium bovis (strain ATCC BAA-935 / AF2122/97)</name>
    <dbReference type="NCBI Taxonomy" id="233413"/>
    <lineage>
        <taxon>Bacteria</taxon>
        <taxon>Bacillati</taxon>
        <taxon>Actinomycetota</taxon>
        <taxon>Actinomycetes</taxon>
        <taxon>Mycobacteriales</taxon>
        <taxon>Mycobacteriaceae</taxon>
        <taxon>Mycobacterium</taxon>
        <taxon>Mycobacterium tuberculosis complex</taxon>
    </lineage>
</organism>
<proteinExistence type="inferred from homology"/>
<sequence length="142" mass="14919">MAGLNIYVRRWRTALHATVSALIVAILGLAITPVASAATARATLSVTSTWQTGFIARFTITNSSTAPLTDWKLEFDLPAGESVLHTWNSTVARSGTHYVLSPANWNRIIAPGGSATGGLRGGLTGSYSPPSSCLLNGQYPCT</sequence>
<protein>
    <recommendedName>
        <fullName evidence="1">Cellulose/chitin binding protein BQ2027_MB2009</fullName>
    </recommendedName>
    <alternativeName>
        <fullName evidence="1">Carbohydrate binding protein</fullName>
        <shortName evidence="1">CBP</shortName>
    </alternativeName>
</protein>